<name>KEFC_KLEP3</name>
<evidence type="ECO:0000255" key="1">
    <source>
        <dbReference type="HAMAP-Rule" id="MF_01413"/>
    </source>
</evidence>
<evidence type="ECO:0000255" key="2">
    <source>
        <dbReference type="PROSITE-ProRule" id="PRU00543"/>
    </source>
</evidence>
<evidence type="ECO:0000256" key="3">
    <source>
        <dbReference type="SAM" id="MobiDB-lite"/>
    </source>
</evidence>
<dbReference type="EMBL" id="CP000964">
    <property type="protein sequence ID" value="ACI08909.1"/>
    <property type="molecule type" value="Genomic_DNA"/>
</dbReference>
<dbReference type="SMR" id="B5Y1Z8"/>
<dbReference type="KEGG" id="kpe:KPK_4698"/>
<dbReference type="HOGENOM" id="CLU_005126_9_3_6"/>
<dbReference type="Proteomes" id="UP000001734">
    <property type="component" value="Chromosome"/>
</dbReference>
<dbReference type="GO" id="GO:0005886">
    <property type="term" value="C:plasma membrane"/>
    <property type="evidence" value="ECO:0007669"/>
    <property type="project" value="UniProtKB-SubCell"/>
</dbReference>
<dbReference type="GO" id="GO:0019899">
    <property type="term" value="F:enzyme binding"/>
    <property type="evidence" value="ECO:0007669"/>
    <property type="project" value="InterPro"/>
</dbReference>
<dbReference type="GO" id="GO:0015503">
    <property type="term" value="F:glutathione-regulated potassium exporter activity"/>
    <property type="evidence" value="ECO:0007669"/>
    <property type="project" value="UniProtKB-UniRule"/>
</dbReference>
<dbReference type="GO" id="GO:0015643">
    <property type="term" value="F:toxic substance binding"/>
    <property type="evidence" value="ECO:0007669"/>
    <property type="project" value="InterPro"/>
</dbReference>
<dbReference type="GO" id="GO:1902600">
    <property type="term" value="P:proton transmembrane transport"/>
    <property type="evidence" value="ECO:0007669"/>
    <property type="project" value="InterPro"/>
</dbReference>
<dbReference type="GO" id="GO:0051595">
    <property type="term" value="P:response to methylglyoxal"/>
    <property type="evidence" value="ECO:0007669"/>
    <property type="project" value="InterPro"/>
</dbReference>
<dbReference type="FunFam" id="1.20.1530.20:FF:000001">
    <property type="entry name" value="Glutathione-regulated potassium-efflux system protein KefB"/>
    <property type="match status" value="1"/>
</dbReference>
<dbReference type="FunFam" id="3.40.50.720:FF:000036">
    <property type="entry name" value="Glutathione-regulated potassium-efflux system protein KefB"/>
    <property type="match status" value="1"/>
</dbReference>
<dbReference type="Gene3D" id="1.20.1530.20">
    <property type="match status" value="1"/>
</dbReference>
<dbReference type="Gene3D" id="3.40.50.720">
    <property type="entry name" value="NAD(P)-binding Rossmann-like Domain"/>
    <property type="match status" value="1"/>
</dbReference>
<dbReference type="HAMAP" id="MF_01413">
    <property type="entry name" value="K_H_efflux_KefC"/>
    <property type="match status" value="1"/>
</dbReference>
<dbReference type="InterPro" id="IPR006153">
    <property type="entry name" value="Cation/H_exchanger_TM"/>
</dbReference>
<dbReference type="InterPro" id="IPR004771">
    <property type="entry name" value="K/H_exchanger"/>
</dbReference>
<dbReference type="InterPro" id="IPR023941">
    <property type="entry name" value="K_H_efflux_KefC"/>
</dbReference>
<dbReference type="InterPro" id="IPR006036">
    <property type="entry name" value="K_uptake_TrkA"/>
</dbReference>
<dbReference type="InterPro" id="IPR038770">
    <property type="entry name" value="Na+/solute_symporter_sf"/>
</dbReference>
<dbReference type="InterPro" id="IPR036291">
    <property type="entry name" value="NAD(P)-bd_dom_sf"/>
</dbReference>
<dbReference type="InterPro" id="IPR003148">
    <property type="entry name" value="RCK_N"/>
</dbReference>
<dbReference type="NCBIfam" id="TIGR00932">
    <property type="entry name" value="2a37"/>
    <property type="match status" value="1"/>
</dbReference>
<dbReference type="NCBIfam" id="NF002924">
    <property type="entry name" value="PRK03562.1"/>
    <property type="match status" value="1"/>
</dbReference>
<dbReference type="PANTHER" id="PTHR46157:SF3">
    <property type="entry name" value="GLUTATHIONE-REGULATED POTASSIUM-EFFLUX SYSTEM PROTEIN KEFC"/>
    <property type="match status" value="1"/>
</dbReference>
<dbReference type="PANTHER" id="PTHR46157">
    <property type="entry name" value="K(+) EFFLUX ANTIPORTER 3, CHLOROPLASTIC"/>
    <property type="match status" value="1"/>
</dbReference>
<dbReference type="Pfam" id="PF00999">
    <property type="entry name" value="Na_H_Exchanger"/>
    <property type="match status" value="1"/>
</dbReference>
<dbReference type="Pfam" id="PF02254">
    <property type="entry name" value="TrkA_N"/>
    <property type="match status" value="1"/>
</dbReference>
<dbReference type="PRINTS" id="PR00335">
    <property type="entry name" value="KUPTAKETRKA"/>
</dbReference>
<dbReference type="SUPFAM" id="SSF51735">
    <property type="entry name" value="NAD(P)-binding Rossmann-fold domains"/>
    <property type="match status" value="1"/>
</dbReference>
<dbReference type="PROSITE" id="PS51201">
    <property type="entry name" value="RCK_N"/>
    <property type="match status" value="1"/>
</dbReference>
<reference key="1">
    <citation type="journal article" date="2008" name="PLoS Genet.">
        <title>Complete genome sequence of the N2-fixing broad host range endophyte Klebsiella pneumoniae 342 and virulence predictions verified in mice.</title>
        <authorList>
            <person name="Fouts D.E."/>
            <person name="Tyler H.L."/>
            <person name="DeBoy R.T."/>
            <person name="Daugherty S."/>
            <person name="Ren Q."/>
            <person name="Badger J.H."/>
            <person name="Durkin A.S."/>
            <person name="Huot H."/>
            <person name="Shrivastava S."/>
            <person name="Kothari S."/>
            <person name="Dodson R.J."/>
            <person name="Mohamoud Y."/>
            <person name="Khouri H."/>
            <person name="Roesch L.F.W."/>
            <person name="Krogfelt K.A."/>
            <person name="Struve C."/>
            <person name="Triplett E.W."/>
            <person name="Methe B.A."/>
        </authorList>
    </citation>
    <scope>NUCLEOTIDE SEQUENCE [LARGE SCALE GENOMIC DNA]</scope>
    <source>
        <strain>342</strain>
    </source>
</reference>
<proteinExistence type="inferred from homology"/>
<keyword id="KW-0050">Antiport</keyword>
<keyword id="KW-0997">Cell inner membrane</keyword>
<keyword id="KW-1003">Cell membrane</keyword>
<keyword id="KW-0406">Ion transport</keyword>
<keyword id="KW-0472">Membrane</keyword>
<keyword id="KW-0630">Potassium</keyword>
<keyword id="KW-0633">Potassium transport</keyword>
<keyword id="KW-0812">Transmembrane</keyword>
<keyword id="KW-1133">Transmembrane helix</keyword>
<keyword id="KW-0813">Transport</keyword>
<sequence>MDSHTLIQALIYLGAAALIVPIAVRLGLGSVLGYLIAGCIIGPWGLRLVTDAEAILHFAEIGVVLMLFVIGLELDPQRLWKLRASVFGGGALQMVACGVLIGLFCMLLGLRWQVAELIGMTLALSSTAIAMQAMNERNLTVSQMGRSAFAVLLFQDIAAIPLVAMIPLLAASGGATSLVAFALSALKVAAALALVVALGRYLTRPLLRFVARSGLREVFSAVALFLVFGFGLLLEEVGLSMAMGAFLAGVLLASSEYRHALESDIEPFKGLLLGLFFIGVGMSIDFGTLVTHPLRIVILLVGFLAIKMLMLWLIARPLGVPRAQRRWFAVLLGQGSEFAFVVFGAARMADVLDGEWAKALTLAVALSMAATPVLLVLLTRLEKSASGQARDADEIDEEQPRVIVAGFGRFGQIAGRLLLSSGVKMVILDHDPDHVDTLRKFDMKVFYGDATRVDLLESAGAEKAEVLINAIDDPHVSLELVERVKEHFPHLQIISRARDVDHYIKLRQAGVEAPERETFEAALKSGRMTLEALGLGAYEARERADLFRRFNLQMVEEMVAMAENDAASRVAVFKRTSDMLTGIINEDRHHLSLVQRHGWQGTEEGRHTGDIADEPENKPSA</sequence>
<feature type="chain" id="PRO_1000145544" description="Glutathione-regulated potassium-efflux system protein KefC">
    <location>
        <begin position="1"/>
        <end position="621"/>
    </location>
</feature>
<feature type="transmembrane region" description="Helical" evidence="1">
    <location>
        <begin position="4"/>
        <end position="24"/>
    </location>
</feature>
<feature type="transmembrane region" description="Helical" evidence="1">
    <location>
        <begin position="26"/>
        <end position="46"/>
    </location>
</feature>
<feature type="transmembrane region" description="Helical" evidence="1">
    <location>
        <begin position="54"/>
        <end position="74"/>
    </location>
</feature>
<feature type="transmembrane region" description="Helical" evidence="1">
    <location>
        <begin position="90"/>
        <end position="110"/>
    </location>
</feature>
<feature type="transmembrane region" description="Helical" evidence="1">
    <location>
        <begin position="114"/>
        <end position="134"/>
    </location>
</feature>
<feature type="transmembrane region" description="Helical" evidence="1">
    <location>
        <begin position="149"/>
        <end position="169"/>
    </location>
</feature>
<feature type="transmembrane region" description="Helical" evidence="1">
    <location>
        <begin position="178"/>
        <end position="198"/>
    </location>
</feature>
<feature type="transmembrane region" description="Helical" evidence="1">
    <location>
        <begin position="218"/>
        <end position="238"/>
    </location>
</feature>
<feature type="transmembrane region" description="Helical" evidence="1">
    <location>
        <begin position="270"/>
        <end position="290"/>
    </location>
</feature>
<feature type="transmembrane region" description="Helical" evidence="1">
    <location>
        <begin position="294"/>
        <end position="314"/>
    </location>
</feature>
<feature type="transmembrane region" description="Helical" evidence="1">
    <location>
        <begin position="326"/>
        <end position="346"/>
    </location>
</feature>
<feature type="transmembrane region" description="Helical" evidence="1">
    <location>
        <begin position="359"/>
        <end position="379"/>
    </location>
</feature>
<feature type="domain" description="RCK N-terminal" evidence="2">
    <location>
        <begin position="399"/>
        <end position="518"/>
    </location>
</feature>
<feature type="region of interest" description="Disordered" evidence="3">
    <location>
        <begin position="598"/>
        <end position="621"/>
    </location>
</feature>
<comment type="function">
    <text evidence="1">Pore-forming subunit of a potassium efflux system that confers protection against electrophiles. Catalyzes K(+)/H(+) antiport.</text>
</comment>
<comment type="subunit">
    <text evidence="1">Homodimer. Interacts with the regulatory subunit KefF.</text>
</comment>
<comment type="subcellular location">
    <subcellularLocation>
        <location evidence="1">Cell inner membrane</location>
        <topology evidence="1">Multi-pass membrane protein</topology>
    </subcellularLocation>
</comment>
<comment type="similarity">
    <text evidence="1">Belongs to the monovalent cation:proton antiporter 2 (CPA2) transporter (TC 2.A.37) family. KefC subfamily.</text>
</comment>
<gene>
    <name evidence="1" type="primary">kefC</name>
    <name type="ordered locus">KPK_4698</name>
</gene>
<accession>B5Y1Z8</accession>
<organism>
    <name type="scientific">Klebsiella pneumoniae (strain 342)</name>
    <dbReference type="NCBI Taxonomy" id="507522"/>
    <lineage>
        <taxon>Bacteria</taxon>
        <taxon>Pseudomonadati</taxon>
        <taxon>Pseudomonadota</taxon>
        <taxon>Gammaproteobacteria</taxon>
        <taxon>Enterobacterales</taxon>
        <taxon>Enterobacteriaceae</taxon>
        <taxon>Klebsiella/Raoultella group</taxon>
        <taxon>Klebsiella</taxon>
        <taxon>Klebsiella pneumoniae complex</taxon>
    </lineage>
</organism>
<protein>
    <recommendedName>
        <fullName evidence="1">Glutathione-regulated potassium-efflux system protein KefC</fullName>
    </recommendedName>
    <alternativeName>
        <fullName evidence="1">K(+)/H(+) antiporter</fullName>
    </alternativeName>
</protein>